<dbReference type="EC" id="2.7.1.144" evidence="1"/>
<dbReference type="EMBL" id="CP000259">
    <property type="protein sequence ID" value="ABF32826.1"/>
    <property type="molecule type" value="Genomic_DNA"/>
</dbReference>
<dbReference type="RefSeq" id="WP_002988085.1">
    <property type="nucleotide sequence ID" value="NC_008021.1"/>
</dbReference>
<dbReference type="SMR" id="Q1JJZ7"/>
<dbReference type="KEGG" id="spk:MGAS9429_Spy1639"/>
<dbReference type="HOGENOM" id="CLU_050013_5_0_9"/>
<dbReference type="UniPathway" id="UPA00704">
    <property type="reaction ID" value="UER00715"/>
</dbReference>
<dbReference type="Proteomes" id="UP000002433">
    <property type="component" value="Chromosome"/>
</dbReference>
<dbReference type="GO" id="GO:0005829">
    <property type="term" value="C:cytosol"/>
    <property type="evidence" value="ECO:0007669"/>
    <property type="project" value="TreeGrafter"/>
</dbReference>
<dbReference type="GO" id="GO:0005524">
    <property type="term" value="F:ATP binding"/>
    <property type="evidence" value="ECO:0007669"/>
    <property type="project" value="UniProtKB-KW"/>
</dbReference>
<dbReference type="GO" id="GO:0008443">
    <property type="term" value="F:phosphofructokinase activity"/>
    <property type="evidence" value="ECO:0007669"/>
    <property type="project" value="TreeGrafter"/>
</dbReference>
<dbReference type="GO" id="GO:0009024">
    <property type="term" value="F:tagatose-6-phosphate kinase activity"/>
    <property type="evidence" value="ECO:0007669"/>
    <property type="project" value="UniProtKB-UniRule"/>
</dbReference>
<dbReference type="GO" id="GO:2001059">
    <property type="term" value="P:D-tagatose 6-phosphate catabolic process"/>
    <property type="evidence" value="ECO:0007669"/>
    <property type="project" value="UniProtKB-UniRule"/>
</dbReference>
<dbReference type="GO" id="GO:0019512">
    <property type="term" value="P:lactose catabolic process via tagatose-6-phosphate"/>
    <property type="evidence" value="ECO:0007669"/>
    <property type="project" value="InterPro"/>
</dbReference>
<dbReference type="CDD" id="cd01164">
    <property type="entry name" value="FruK_PfkB_like"/>
    <property type="match status" value="1"/>
</dbReference>
<dbReference type="FunFam" id="3.40.1190.20:FF:000001">
    <property type="entry name" value="Phosphofructokinase"/>
    <property type="match status" value="1"/>
</dbReference>
<dbReference type="Gene3D" id="3.40.1190.20">
    <property type="match status" value="1"/>
</dbReference>
<dbReference type="HAMAP" id="MF_01557">
    <property type="entry name" value="LacC"/>
    <property type="match status" value="1"/>
</dbReference>
<dbReference type="InterPro" id="IPR002173">
    <property type="entry name" value="Carboh/pur_kinase_PfkB_CS"/>
</dbReference>
<dbReference type="InterPro" id="IPR005926">
    <property type="entry name" value="LacC"/>
</dbReference>
<dbReference type="InterPro" id="IPR011611">
    <property type="entry name" value="PfkB_dom"/>
</dbReference>
<dbReference type="InterPro" id="IPR029056">
    <property type="entry name" value="Ribokinase-like"/>
</dbReference>
<dbReference type="InterPro" id="IPR017583">
    <property type="entry name" value="Tagatose/fructose_Pkinase"/>
</dbReference>
<dbReference type="NCBIfam" id="TIGR03168">
    <property type="entry name" value="1-PFK"/>
    <property type="match status" value="1"/>
</dbReference>
<dbReference type="NCBIfam" id="TIGR01231">
    <property type="entry name" value="lacC"/>
    <property type="match status" value="1"/>
</dbReference>
<dbReference type="NCBIfam" id="NF010033">
    <property type="entry name" value="PRK13508.1"/>
    <property type="match status" value="1"/>
</dbReference>
<dbReference type="PANTHER" id="PTHR46566:SF5">
    <property type="entry name" value="1-PHOSPHOFRUCTOKINASE"/>
    <property type="match status" value="1"/>
</dbReference>
<dbReference type="PANTHER" id="PTHR46566">
    <property type="entry name" value="1-PHOSPHOFRUCTOKINASE-RELATED"/>
    <property type="match status" value="1"/>
</dbReference>
<dbReference type="Pfam" id="PF00294">
    <property type="entry name" value="PfkB"/>
    <property type="match status" value="1"/>
</dbReference>
<dbReference type="PIRSF" id="PIRSF000535">
    <property type="entry name" value="1PFK/6PFK/LacC"/>
    <property type="match status" value="1"/>
</dbReference>
<dbReference type="SUPFAM" id="SSF53613">
    <property type="entry name" value="Ribokinase-like"/>
    <property type="match status" value="1"/>
</dbReference>
<dbReference type="PROSITE" id="PS00583">
    <property type="entry name" value="PFKB_KINASES_1"/>
    <property type="match status" value="1"/>
</dbReference>
<feature type="chain" id="PRO_1000068940" description="Tagatose-6-phosphate kinase">
    <location>
        <begin position="1"/>
        <end position="309"/>
    </location>
</feature>
<protein>
    <recommendedName>
        <fullName evidence="1">Tagatose-6-phosphate kinase</fullName>
        <ecNumber evidence="1">2.7.1.144</ecNumber>
    </recommendedName>
    <alternativeName>
        <fullName evidence="1">Phosphotagatokinase</fullName>
    </alternativeName>
</protein>
<reference key="1">
    <citation type="journal article" date="2006" name="Proc. Natl. Acad. Sci. U.S.A.">
        <title>Molecular genetic anatomy of inter- and intraserotype variation in the human bacterial pathogen group A Streptococcus.</title>
        <authorList>
            <person name="Beres S.B."/>
            <person name="Richter E.W."/>
            <person name="Nagiec M.J."/>
            <person name="Sumby P."/>
            <person name="Porcella S.F."/>
            <person name="DeLeo F.R."/>
            <person name="Musser J.M."/>
        </authorList>
    </citation>
    <scope>NUCLEOTIDE SEQUENCE [LARGE SCALE GENOMIC DNA]</scope>
    <source>
        <strain>MGAS9429</strain>
    </source>
</reference>
<organism>
    <name type="scientific">Streptococcus pyogenes serotype M12 (strain MGAS9429)</name>
    <dbReference type="NCBI Taxonomy" id="370551"/>
    <lineage>
        <taxon>Bacteria</taxon>
        <taxon>Bacillati</taxon>
        <taxon>Bacillota</taxon>
        <taxon>Bacilli</taxon>
        <taxon>Lactobacillales</taxon>
        <taxon>Streptococcaceae</taxon>
        <taxon>Streptococcus</taxon>
    </lineage>
</organism>
<evidence type="ECO:0000255" key="1">
    <source>
        <dbReference type="HAMAP-Rule" id="MF_01557"/>
    </source>
</evidence>
<keyword id="KW-0067">ATP-binding</keyword>
<keyword id="KW-0418">Kinase</keyword>
<keyword id="KW-0423">Lactose metabolism</keyword>
<keyword id="KW-0547">Nucleotide-binding</keyword>
<keyword id="KW-0808">Transferase</keyword>
<comment type="catalytic activity">
    <reaction evidence="1">
        <text>D-tagatofuranose 6-phosphate + ATP = D-tagatofuranose 1,6-bisphosphate + ADP + H(+)</text>
        <dbReference type="Rhea" id="RHEA:12420"/>
        <dbReference type="ChEBI" id="CHEBI:15378"/>
        <dbReference type="ChEBI" id="CHEBI:30616"/>
        <dbReference type="ChEBI" id="CHEBI:58694"/>
        <dbReference type="ChEBI" id="CHEBI:58695"/>
        <dbReference type="ChEBI" id="CHEBI:456216"/>
        <dbReference type="EC" id="2.7.1.144"/>
    </reaction>
</comment>
<comment type="pathway">
    <text evidence="1">Carbohydrate metabolism; D-tagatose 6-phosphate degradation; D-glyceraldehyde 3-phosphate and glycerone phosphate from D-tagatose 6-phosphate: step 1/2.</text>
</comment>
<comment type="similarity">
    <text evidence="1">Belongs to the carbohydrate kinase PfkB family. LacC subfamily.</text>
</comment>
<name>LACC_STRPC</name>
<proteinExistence type="inferred from homology"/>
<sequence length="309" mass="33495">MILTVTLNPAIDVSYPLDELKCDTVNRVVDVTKTPGGKGLNVSRVLNDFGETVKATGCVGGESGDFIINHLPDSILSRFYKISGDTRTCIAILHEGNQTEILEKGPLLSVDEIDGFTHQFKYLLNDVDVVTMSGSLPAGMPDDYYQKLIKIANLNGKKTVLDCSGNALEAVLKGDSKPTVIKPNLEELSQLLGKEMTKDFEALKEVLQDELFEGIEWIIVSLGADGVFAKHKDTFYNVDIPKIKIVSAVGSGDSTVAGIASGLANDEDDRALLTKANVLGMLNAQEKTTGHVNMANYDKLYQSIKVKEV</sequence>
<accession>Q1JJZ7</accession>
<gene>
    <name evidence="1" type="primary">lacC</name>
    <name type="ordered locus">MGAS9429_Spy1639</name>
</gene>